<keyword id="KW-0496">Mitochondrion</keyword>
<keyword id="KW-0687">Ribonucleoprotein</keyword>
<keyword id="KW-0689">Ribosomal protein</keyword>
<comment type="subcellular location">
    <subcellularLocation>
        <location>Mitochondrion</location>
    </subcellularLocation>
</comment>
<comment type="similarity">
    <text evidence="1">Belongs to the universal ribosomal protein uL6 family.</text>
</comment>
<geneLocation type="mitochondrion"/>
<name>RM06_ACACA</name>
<dbReference type="EMBL" id="U12386">
    <property type="protein sequence ID" value="AAD11847.1"/>
    <property type="molecule type" value="Genomic_DNA"/>
</dbReference>
<dbReference type="PIR" id="S53855">
    <property type="entry name" value="S53855"/>
</dbReference>
<dbReference type="RefSeq" id="NP_042554.1">
    <property type="nucleotide sequence ID" value="NC_001637.1"/>
</dbReference>
<dbReference type="SMR" id="P46765"/>
<dbReference type="GeneID" id="1734051"/>
<dbReference type="GO" id="GO:0005739">
    <property type="term" value="C:mitochondrion"/>
    <property type="evidence" value="ECO:0007669"/>
    <property type="project" value="UniProtKB-SubCell"/>
</dbReference>
<dbReference type="GO" id="GO:1990904">
    <property type="term" value="C:ribonucleoprotein complex"/>
    <property type="evidence" value="ECO:0007669"/>
    <property type="project" value="UniProtKB-KW"/>
</dbReference>
<dbReference type="GO" id="GO:0005840">
    <property type="term" value="C:ribosome"/>
    <property type="evidence" value="ECO:0007669"/>
    <property type="project" value="UniProtKB-KW"/>
</dbReference>
<dbReference type="GO" id="GO:0019843">
    <property type="term" value="F:rRNA binding"/>
    <property type="evidence" value="ECO:0007669"/>
    <property type="project" value="InterPro"/>
</dbReference>
<dbReference type="GO" id="GO:0003735">
    <property type="term" value="F:structural constituent of ribosome"/>
    <property type="evidence" value="ECO:0007669"/>
    <property type="project" value="InterPro"/>
</dbReference>
<dbReference type="GO" id="GO:0006412">
    <property type="term" value="P:translation"/>
    <property type="evidence" value="ECO:0007669"/>
    <property type="project" value="InterPro"/>
</dbReference>
<dbReference type="Gene3D" id="3.90.930.12">
    <property type="entry name" value="Ribosomal protein L6, alpha-beta domain"/>
    <property type="match status" value="1"/>
</dbReference>
<dbReference type="InterPro" id="IPR000702">
    <property type="entry name" value="Ribosomal_uL6-like"/>
</dbReference>
<dbReference type="InterPro" id="IPR036789">
    <property type="entry name" value="Ribosomal_uL6-like_a/b-dom_sf"/>
</dbReference>
<dbReference type="InterPro" id="IPR002358">
    <property type="entry name" value="Ribosomal_uL6_CS"/>
</dbReference>
<dbReference type="PIRSF" id="PIRSF002162">
    <property type="entry name" value="Ribosomal_L6"/>
    <property type="match status" value="1"/>
</dbReference>
<dbReference type="SUPFAM" id="SSF56053">
    <property type="entry name" value="Ribosomal protein L6"/>
    <property type="match status" value="1"/>
</dbReference>
<dbReference type="PROSITE" id="PS00525">
    <property type="entry name" value="RIBOSOMAL_L6_1"/>
    <property type="match status" value="1"/>
</dbReference>
<sequence length="181" mass="21772">MELLKVIKSQDKITLKTEKVNKNVFFYFKNKKKILLKITFSGELFLKERTLITLNNLNYSNYSNYIKFMAKNLETFFYDQYNYFSKLHMIGLGFKNFILRKHLYILVGDCNYIIFRIPDSLKIFCKKNQVFILGESNVEIFNFMSNIKRVKKSNFYKGKGVLQFKNFKFTKLKVGKKQRFM</sequence>
<organism>
    <name type="scientific">Acanthamoeba castellanii</name>
    <name type="common">Amoeba</name>
    <dbReference type="NCBI Taxonomy" id="5755"/>
    <lineage>
        <taxon>Eukaryota</taxon>
        <taxon>Amoebozoa</taxon>
        <taxon>Discosea</taxon>
        <taxon>Longamoebia</taxon>
        <taxon>Centramoebida</taxon>
        <taxon>Acanthamoebidae</taxon>
        <taxon>Acanthamoeba</taxon>
    </lineage>
</organism>
<feature type="chain" id="PRO_0000131094" description="Large ribosomal subunit protein uL6m">
    <location>
        <begin position="1"/>
        <end position="181"/>
    </location>
</feature>
<protein>
    <recommendedName>
        <fullName evidence="1">Large ribosomal subunit protein uL6m</fullName>
    </recommendedName>
    <alternativeName>
        <fullName>60S ribosomal protein L6, mitochondrial</fullName>
    </alternativeName>
</protein>
<proteinExistence type="inferred from homology"/>
<accession>P46765</accession>
<reference key="1">
    <citation type="journal article" date="1995" name="J. Mol. Biol.">
        <title>The mitochondrial DNA of the amoeboid protozoon, Acanthamoeba castellanii: complete sequence, gene content and genome organization.</title>
        <authorList>
            <person name="Burger G."/>
            <person name="Plante I."/>
            <person name="Lonergan K.M."/>
            <person name="Gray M.W."/>
        </authorList>
    </citation>
    <scope>NUCLEOTIDE SEQUENCE [GENOMIC DNA]</scope>
    <source>
        <strain>ATCC 30010 / Neff</strain>
    </source>
</reference>
<evidence type="ECO:0000305" key="1"/>
<gene>
    <name type="primary">RPL6</name>
</gene>